<protein>
    <recommendedName>
        <fullName>Probable pectinesterase/pectinesterase inhibitor 21</fullName>
    </recommendedName>
    <domain>
        <recommendedName>
            <fullName>Pectinesterase inhibitor 21</fullName>
        </recommendedName>
        <alternativeName>
            <fullName>Pectin methylesterase inhibitor 21</fullName>
        </alternativeName>
    </domain>
    <domain>
        <recommendedName>
            <fullName>Pectinesterase 21</fullName>
            <shortName>PE 21</shortName>
            <ecNumber>3.1.1.11</ecNumber>
        </recommendedName>
        <alternativeName>
            <fullName>Pectin methylesterase 21</fullName>
            <shortName>AtPME21</shortName>
        </alternativeName>
    </domain>
</protein>
<reference key="1">
    <citation type="journal article" date="2000" name="Nature">
        <title>Sequence and analysis of chromosome 3 of the plant Arabidopsis thaliana.</title>
        <authorList>
            <person name="Salanoubat M."/>
            <person name="Lemcke K."/>
            <person name="Rieger M."/>
            <person name="Ansorge W."/>
            <person name="Unseld M."/>
            <person name="Fartmann B."/>
            <person name="Valle G."/>
            <person name="Bloecker H."/>
            <person name="Perez-Alonso M."/>
            <person name="Obermaier B."/>
            <person name="Delseny M."/>
            <person name="Boutry M."/>
            <person name="Grivell L.A."/>
            <person name="Mache R."/>
            <person name="Puigdomenech P."/>
            <person name="De Simone V."/>
            <person name="Choisne N."/>
            <person name="Artiguenave F."/>
            <person name="Robert C."/>
            <person name="Brottier P."/>
            <person name="Wincker P."/>
            <person name="Cattolico L."/>
            <person name="Weissenbach J."/>
            <person name="Saurin W."/>
            <person name="Quetier F."/>
            <person name="Schaefer M."/>
            <person name="Mueller-Auer S."/>
            <person name="Gabel C."/>
            <person name="Fuchs M."/>
            <person name="Benes V."/>
            <person name="Wurmbach E."/>
            <person name="Drzonek H."/>
            <person name="Erfle H."/>
            <person name="Jordan N."/>
            <person name="Bangert S."/>
            <person name="Wiedelmann R."/>
            <person name="Kranz H."/>
            <person name="Voss H."/>
            <person name="Holland R."/>
            <person name="Brandt P."/>
            <person name="Nyakatura G."/>
            <person name="Vezzi A."/>
            <person name="D'Angelo M."/>
            <person name="Pallavicini A."/>
            <person name="Toppo S."/>
            <person name="Simionati B."/>
            <person name="Conrad A."/>
            <person name="Hornischer K."/>
            <person name="Kauer G."/>
            <person name="Loehnert T.-H."/>
            <person name="Nordsiek G."/>
            <person name="Reichelt J."/>
            <person name="Scharfe M."/>
            <person name="Schoen O."/>
            <person name="Bargues M."/>
            <person name="Terol J."/>
            <person name="Climent J."/>
            <person name="Navarro P."/>
            <person name="Collado C."/>
            <person name="Perez-Perez A."/>
            <person name="Ottenwaelder B."/>
            <person name="Duchemin D."/>
            <person name="Cooke R."/>
            <person name="Laudie M."/>
            <person name="Berger-Llauro C."/>
            <person name="Purnelle B."/>
            <person name="Masuy D."/>
            <person name="de Haan M."/>
            <person name="Maarse A.C."/>
            <person name="Alcaraz J.-P."/>
            <person name="Cottet A."/>
            <person name="Casacuberta E."/>
            <person name="Monfort A."/>
            <person name="Argiriou A."/>
            <person name="Flores M."/>
            <person name="Liguori R."/>
            <person name="Vitale D."/>
            <person name="Mannhaupt G."/>
            <person name="Haase D."/>
            <person name="Schoof H."/>
            <person name="Rudd S."/>
            <person name="Zaccaria P."/>
            <person name="Mewes H.-W."/>
            <person name="Mayer K.F.X."/>
            <person name="Kaul S."/>
            <person name="Town C.D."/>
            <person name="Koo H.L."/>
            <person name="Tallon L.J."/>
            <person name="Jenkins J."/>
            <person name="Rooney T."/>
            <person name="Rizzo M."/>
            <person name="Walts A."/>
            <person name="Utterback T."/>
            <person name="Fujii C.Y."/>
            <person name="Shea T.P."/>
            <person name="Creasy T.H."/>
            <person name="Haas B."/>
            <person name="Maiti R."/>
            <person name="Wu D."/>
            <person name="Peterson J."/>
            <person name="Van Aken S."/>
            <person name="Pai G."/>
            <person name="Militscher J."/>
            <person name="Sellers P."/>
            <person name="Gill J.E."/>
            <person name="Feldblyum T.V."/>
            <person name="Preuss D."/>
            <person name="Lin X."/>
            <person name="Nierman W.C."/>
            <person name="Salzberg S.L."/>
            <person name="White O."/>
            <person name="Venter J.C."/>
            <person name="Fraser C.M."/>
            <person name="Kaneko T."/>
            <person name="Nakamura Y."/>
            <person name="Sato S."/>
            <person name="Kato T."/>
            <person name="Asamizu E."/>
            <person name="Sasamoto S."/>
            <person name="Kimura T."/>
            <person name="Idesawa K."/>
            <person name="Kawashima K."/>
            <person name="Kishida Y."/>
            <person name="Kiyokawa C."/>
            <person name="Kohara M."/>
            <person name="Matsumoto M."/>
            <person name="Matsuno A."/>
            <person name="Muraki A."/>
            <person name="Nakayama S."/>
            <person name="Nakazaki N."/>
            <person name="Shinpo S."/>
            <person name="Takeuchi C."/>
            <person name="Wada T."/>
            <person name="Watanabe A."/>
            <person name="Yamada M."/>
            <person name="Yasuda M."/>
            <person name="Tabata S."/>
        </authorList>
    </citation>
    <scope>NUCLEOTIDE SEQUENCE [LARGE SCALE GENOMIC DNA]</scope>
    <source>
        <strain>cv. Columbia</strain>
    </source>
</reference>
<reference key="2">
    <citation type="journal article" date="2017" name="Plant J.">
        <title>Araport11: a complete reannotation of the Arabidopsis thaliana reference genome.</title>
        <authorList>
            <person name="Cheng C.Y."/>
            <person name="Krishnakumar V."/>
            <person name="Chan A.P."/>
            <person name="Thibaud-Nissen F."/>
            <person name="Schobel S."/>
            <person name="Town C.D."/>
        </authorList>
    </citation>
    <scope>GENOME REANNOTATION</scope>
    <source>
        <strain>cv. Columbia</strain>
    </source>
</reference>
<reference key="3">
    <citation type="journal article" date="2002" name="Science">
        <title>Functional annotation of a full-length Arabidopsis cDNA collection.</title>
        <authorList>
            <person name="Seki M."/>
            <person name="Narusaka M."/>
            <person name="Kamiya A."/>
            <person name="Ishida J."/>
            <person name="Satou M."/>
            <person name="Sakurai T."/>
            <person name="Nakajima M."/>
            <person name="Enju A."/>
            <person name="Akiyama K."/>
            <person name="Oono Y."/>
            <person name="Muramatsu M."/>
            <person name="Hayashizaki Y."/>
            <person name="Kawai J."/>
            <person name="Carninci P."/>
            <person name="Itoh M."/>
            <person name="Ishii Y."/>
            <person name="Arakawa T."/>
            <person name="Shibata K."/>
            <person name="Shinagawa A."/>
            <person name="Shinozaki K."/>
        </authorList>
    </citation>
    <scope>NUCLEOTIDE SEQUENCE [LARGE SCALE MRNA]</scope>
    <source>
        <strain>cv. Columbia</strain>
    </source>
</reference>
<reference key="4">
    <citation type="journal article" date="2003" name="Science">
        <title>Empirical analysis of transcriptional activity in the Arabidopsis genome.</title>
        <authorList>
            <person name="Yamada K."/>
            <person name="Lim J."/>
            <person name="Dale J.M."/>
            <person name="Chen H."/>
            <person name="Shinn P."/>
            <person name="Palm C.J."/>
            <person name="Southwick A.M."/>
            <person name="Wu H.C."/>
            <person name="Kim C.J."/>
            <person name="Nguyen M."/>
            <person name="Pham P.K."/>
            <person name="Cheuk R.F."/>
            <person name="Karlin-Newmann G."/>
            <person name="Liu S.X."/>
            <person name="Lam B."/>
            <person name="Sakano H."/>
            <person name="Wu T."/>
            <person name="Yu G."/>
            <person name="Miranda M."/>
            <person name="Quach H.L."/>
            <person name="Tripp M."/>
            <person name="Chang C.H."/>
            <person name="Lee J.M."/>
            <person name="Toriumi M.J."/>
            <person name="Chan M.M."/>
            <person name="Tang C.C."/>
            <person name="Onodera C.S."/>
            <person name="Deng J.M."/>
            <person name="Akiyama K."/>
            <person name="Ansari Y."/>
            <person name="Arakawa T."/>
            <person name="Banh J."/>
            <person name="Banno F."/>
            <person name="Bowser L."/>
            <person name="Brooks S.Y."/>
            <person name="Carninci P."/>
            <person name="Chao Q."/>
            <person name="Choy N."/>
            <person name="Enju A."/>
            <person name="Goldsmith A.D."/>
            <person name="Gurjal M."/>
            <person name="Hansen N.F."/>
            <person name="Hayashizaki Y."/>
            <person name="Johnson-Hopson C."/>
            <person name="Hsuan V.W."/>
            <person name="Iida K."/>
            <person name="Karnes M."/>
            <person name="Khan S."/>
            <person name="Koesema E."/>
            <person name="Ishida J."/>
            <person name="Jiang P.X."/>
            <person name="Jones T."/>
            <person name="Kawai J."/>
            <person name="Kamiya A."/>
            <person name="Meyers C."/>
            <person name="Nakajima M."/>
            <person name="Narusaka M."/>
            <person name="Seki M."/>
            <person name="Sakurai T."/>
            <person name="Satou M."/>
            <person name="Tamse R."/>
            <person name="Vaysberg M."/>
            <person name="Wallender E.K."/>
            <person name="Wong C."/>
            <person name="Yamamura Y."/>
            <person name="Yuan S."/>
            <person name="Shinozaki K."/>
            <person name="Davis R.W."/>
            <person name="Theologis A."/>
            <person name="Ecker J.R."/>
        </authorList>
    </citation>
    <scope>NUCLEOTIDE SEQUENCE [LARGE SCALE MRNA]</scope>
    <source>
        <strain>cv. Columbia</strain>
    </source>
</reference>
<reference key="5">
    <citation type="journal article" date="2004" name="Carbohydr. Res.">
        <title>Pectin methylesterases: sequence-structural features and phylogenetic relationships.</title>
        <authorList>
            <person name="Markovic O."/>
            <person name="Janecek S."/>
        </authorList>
    </citation>
    <scope>GENE FAMILY</scope>
    <scope>NOMENCLATURE</scope>
</reference>
<reference key="6">
    <citation type="journal article" date="2006" name="Planta">
        <title>Comprehensive expression profiling of the pectin methylesterase gene family during silique development in Arabidopsis thaliana.</title>
        <authorList>
            <person name="Louvet R."/>
            <person name="Cavel E."/>
            <person name="Gutierrez L."/>
            <person name="Guenin S."/>
            <person name="Roger D."/>
            <person name="Gillet F."/>
            <person name="Guerineau F."/>
            <person name="Pelloux J."/>
        </authorList>
    </citation>
    <scope>TISSUE SPECIFICITY</scope>
    <scope>DEVELOPMENTAL STAGE</scope>
</reference>
<keyword id="KW-0063">Aspartyl esterase</keyword>
<keyword id="KW-1015">Disulfide bond</keyword>
<keyword id="KW-0325">Glycoprotein</keyword>
<keyword id="KW-0378">Hydrolase</keyword>
<keyword id="KW-0472">Membrane</keyword>
<keyword id="KW-1185">Reference proteome</keyword>
<keyword id="KW-0812">Transmembrane</keyword>
<keyword id="KW-1133">Transmembrane helix</keyword>
<sequence length="669" mass="72917">MSYGYDDESKRKRRYIVITISSVLLISMVVAVTVGVSLNKHDGDSKGKAEVNASVKAVKDVCAPTDYRKTCEDTLIKNGKNTTDPMELVKTAFNVTMKQITDAAKKSQTIMELQKDSRTRMALDQCKELMDYALDELSNSFEELGKFEFHLLDEALINLRIWLSAAISHEETCLEGFQGTQGNAGETMKKALKTAIELTHNGLAIISEMSNFVGQMQIPGLNSRRLLAEGFPSWVDQRGRKLLQAAAAYSDVKPDIVVAQDGSGQYKTINEALQFVPKKRNTTFVVHIKAGLYKEYVQVNKTMSHLVFIGDGPDKTIISGNKNYKDGITTYRTATVAIVGNYFIAKNIGFENTAGAIKHQAVAVRVQSDESIFFNCRFDGYQDTLYTHSHRQFFRDCTISGTIDFLFGDAAAVFQNCTLLVRKPLPNQACPITAHGRKDPRESTGFVFQGCTIAGEPDYLAVKETSKAYLGRPWKEYSRTIIMNTFIPDFVQPQGWQPWLGDFGLKTLFYSEVQNTGPGSALANRVTWAGIKTLSEEDILKFTPAQYIQGDDWIPGKGVPYTTGLLAGNPAAATTTPSVSAAAPGFSTFTDTSGADSIAPTASPAASPESSISMAYTGTASPESSIKVSSSTETASPESSFTEASTASPESSIMVASTESSGSFFSMFT</sequence>
<name>PME21_ARATH</name>
<proteinExistence type="evidence at transcript level"/>
<accession>Q8GX86</accession>
<accession>Q9M9W6</accession>
<evidence type="ECO:0000250" key="1"/>
<evidence type="ECO:0000255" key="2"/>
<evidence type="ECO:0000256" key="3">
    <source>
        <dbReference type="SAM" id="MobiDB-lite"/>
    </source>
</evidence>
<evidence type="ECO:0000269" key="4">
    <source>
    </source>
</evidence>
<evidence type="ECO:0000305" key="5"/>
<comment type="function">
    <text evidence="1">Acts in the modification of cell walls via demethylesterification of cell wall pectin.</text>
</comment>
<comment type="catalytic activity">
    <reaction>
        <text>[(1-&gt;4)-alpha-D-galacturonosyl methyl ester](n) + n H2O = [(1-&gt;4)-alpha-D-galacturonosyl](n) + n methanol + n H(+)</text>
        <dbReference type="Rhea" id="RHEA:22380"/>
        <dbReference type="Rhea" id="RHEA-COMP:14570"/>
        <dbReference type="Rhea" id="RHEA-COMP:14573"/>
        <dbReference type="ChEBI" id="CHEBI:15377"/>
        <dbReference type="ChEBI" id="CHEBI:15378"/>
        <dbReference type="ChEBI" id="CHEBI:17790"/>
        <dbReference type="ChEBI" id="CHEBI:140522"/>
        <dbReference type="ChEBI" id="CHEBI:140523"/>
        <dbReference type="EC" id="3.1.1.11"/>
    </reaction>
</comment>
<comment type="pathway">
    <text>Glycan metabolism; pectin degradation; 2-dehydro-3-deoxy-D-gluconate from pectin: step 1/5.</text>
</comment>
<comment type="subcellular location">
    <subcellularLocation>
        <location evidence="5">Membrane</location>
        <topology evidence="5">Single-pass membrane protein</topology>
    </subcellularLocation>
</comment>
<comment type="tissue specificity">
    <text evidence="4">Expressed in flower buds.</text>
</comment>
<comment type="miscellaneous">
    <text>The PMEI region may act as an autoinhibitory domain and prevent untimely PME activity during transport.</text>
</comment>
<comment type="similarity">
    <text evidence="5">In the N-terminal section; belongs to the PMEI family.</text>
</comment>
<comment type="similarity">
    <text evidence="5">In the C-terminal section; belongs to the pectinesterase family.</text>
</comment>
<gene>
    <name type="primary">PME21</name>
    <name type="synonym">ARATH21</name>
    <name type="ordered locus">At3g05610</name>
    <name type="ORF">F18C1.12</name>
</gene>
<organism>
    <name type="scientific">Arabidopsis thaliana</name>
    <name type="common">Mouse-ear cress</name>
    <dbReference type="NCBI Taxonomy" id="3702"/>
    <lineage>
        <taxon>Eukaryota</taxon>
        <taxon>Viridiplantae</taxon>
        <taxon>Streptophyta</taxon>
        <taxon>Embryophyta</taxon>
        <taxon>Tracheophyta</taxon>
        <taxon>Spermatophyta</taxon>
        <taxon>Magnoliopsida</taxon>
        <taxon>eudicotyledons</taxon>
        <taxon>Gunneridae</taxon>
        <taxon>Pentapetalae</taxon>
        <taxon>rosids</taxon>
        <taxon>malvids</taxon>
        <taxon>Brassicales</taxon>
        <taxon>Brassicaceae</taxon>
        <taxon>Camelineae</taxon>
        <taxon>Arabidopsis</taxon>
    </lineage>
</organism>
<feature type="chain" id="PRO_0000371677" description="Probable pectinesterase/pectinesterase inhibitor 21">
    <location>
        <begin position="1"/>
        <end position="669"/>
    </location>
</feature>
<feature type="transmembrane region" description="Helical" evidence="2">
    <location>
        <begin position="16"/>
        <end position="36"/>
    </location>
</feature>
<feature type="region of interest" description="Pectinesterase inhibitor 21">
    <location>
        <begin position="52"/>
        <end position="205"/>
    </location>
</feature>
<feature type="region of interest" description="Pectinesterase 21">
    <location>
        <begin position="255"/>
        <end position="551"/>
    </location>
</feature>
<feature type="region of interest" description="Disordered" evidence="3">
    <location>
        <begin position="615"/>
        <end position="669"/>
    </location>
</feature>
<feature type="compositionally biased region" description="Polar residues" evidence="3">
    <location>
        <begin position="616"/>
        <end position="628"/>
    </location>
</feature>
<feature type="compositionally biased region" description="Low complexity" evidence="3">
    <location>
        <begin position="629"/>
        <end position="652"/>
    </location>
</feature>
<feature type="compositionally biased region" description="Polar residues" evidence="3">
    <location>
        <begin position="654"/>
        <end position="669"/>
    </location>
</feature>
<feature type="active site" description="Proton donor; for pectinesterase activity" evidence="1">
    <location>
        <position position="383"/>
    </location>
</feature>
<feature type="active site" description="Nucleophile; for pectinesterase activity" evidence="1">
    <location>
        <position position="404"/>
    </location>
</feature>
<feature type="binding site" evidence="1">
    <location>
        <position position="330"/>
    </location>
    <ligand>
        <name>substrate</name>
        <note>for pectinesterase activity</note>
    </ligand>
</feature>
<feature type="binding site" evidence="1">
    <location>
        <position position="360"/>
    </location>
    <ligand>
        <name>substrate</name>
        <note>for pectinesterase activity</note>
    </ligand>
</feature>
<feature type="binding site" evidence="1">
    <location>
        <position position="472"/>
    </location>
    <ligand>
        <name>substrate</name>
        <note>for pectinesterase activity</note>
    </ligand>
</feature>
<feature type="binding site" evidence="1">
    <location>
        <position position="474"/>
    </location>
    <ligand>
        <name>substrate</name>
        <note>for pectinesterase activity</note>
    </ligand>
</feature>
<feature type="site" description="Transition state stabilizer" evidence="1">
    <location>
        <position position="382"/>
    </location>
</feature>
<feature type="glycosylation site" description="N-linked (GlcNAc...) asparagine" evidence="2">
    <location>
        <position position="52"/>
    </location>
</feature>
<feature type="glycosylation site" description="N-linked (GlcNAc...) asparagine" evidence="2">
    <location>
        <position position="81"/>
    </location>
</feature>
<feature type="glycosylation site" description="N-linked (GlcNAc...) asparagine" evidence="2">
    <location>
        <position position="94"/>
    </location>
</feature>
<feature type="glycosylation site" description="N-linked (GlcNAc...) asparagine" evidence="2">
    <location>
        <position position="281"/>
    </location>
</feature>
<feature type="glycosylation site" description="N-linked (GlcNAc...) asparagine" evidence="2">
    <location>
        <position position="300"/>
    </location>
</feature>
<feature type="glycosylation site" description="N-linked (GlcNAc...) asparagine" evidence="2">
    <location>
        <position position="416"/>
    </location>
</feature>
<feature type="disulfide bond" evidence="1">
    <location>
        <begin position="397"/>
        <end position="417"/>
    </location>
</feature>
<feature type="sequence conflict" description="In Ref. 3; BAC42986 and 4; AAO64883." evidence="5" ref="3 4">
    <original>T</original>
    <variation>A</variation>
    <location>
        <position position="330"/>
    </location>
</feature>
<feature type="sequence conflict" description="In Ref. 3; BAC42986 and 4; AAO64883." evidence="5" ref="3 4">
    <original>D</original>
    <variation>N</variation>
    <location>
        <position position="383"/>
    </location>
</feature>
<feature type="sequence conflict" description="In Ref. 3; BAC42986 and 4; AAO64883." evidence="5" ref="3 4">
    <original>S</original>
    <variation>F</variation>
    <location>
        <position position="630"/>
    </location>
</feature>
<dbReference type="EC" id="3.1.1.11"/>
<dbReference type="EMBL" id="AC011620">
    <property type="protein sequence ID" value="AAF26136.1"/>
    <property type="molecule type" value="Genomic_DNA"/>
</dbReference>
<dbReference type="EMBL" id="CP002686">
    <property type="protein sequence ID" value="AEE74266.1"/>
    <property type="molecule type" value="Genomic_DNA"/>
</dbReference>
<dbReference type="EMBL" id="AK118374">
    <property type="protein sequence ID" value="BAC42986.1"/>
    <property type="molecule type" value="mRNA"/>
</dbReference>
<dbReference type="EMBL" id="BT005948">
    <property type="protein sequence ID" value="AAO64883.1"/>
    <property type="molecule type" value="mRNA"/>
</dbReference>
<dbReference type="RefSeq" id="NP_187212.1">
    <property type="nucleotide sequence ID" value="NM_111434.3"/>
</dbReference>
<dbReference type="SMR" id="Q8GX86"/>
<dbReference type="FunCoup" id="Q8GX86">
    <property type="interactions" value="160"/>
</dbReference>
<dbReference type="STRING" id="3702.Q8GX86"/>
<dbReference type="GlyCosmos" id="Q8GX86">
    <property type="glycosylation" value="6 sites, No reported glycans"/>
</dbReference>
<dbReference type="GlyGen" id="Q8GX86">
    <property type="glycosylation" value="8 sites"/>
</dbReference>
<dbReference type="PaxDb" id="3702-AT3G05610.1"/>
<dbReference type="ProteomicsDB" id="234930"/>
<dbReference type="EnsemblPlants" id="AT3G05610.1">
    <property type="protein sequence ID" value="AT3G05610.1"/>
    <property type="gene ID" value="AT3G05610"/>
</dbReference>
<dbReference type="GeneID" id="819727"/>
<dbReference type="Gramene" id="AT3G05610.1">
    <property type="protein sequence ID" value="AT3G05610.1"/>
    <property type="gene ID" value="AT3G05610"/>
</dbReference>
<dbReference type="KEGG" id="ath:AT3G05610"/>
<dbReference type="Araport" id="AT3G05610"/>
<dbReference type="TAIR" id="AT3G05610"/>
<dbReference type="eggNOG" id="ENOG502QPZF">
    <property type="taxonomic scope" value="Eukaryota"/>
</dbReference>
<dbReference type="HOGENOM" id="CLU_012243_9_0_1"/>
<dbReference type="InParanoid" id="Q8GX86"/>
<dbReference type="OMA" id="IPRSMIN"/>
<dbReference type="PhylomeDB" id="Q8GX86"/>
<dbReference type="BioCyc" id="ARA:AT3G05610-MONOMER"/>
<dbReference type="UniPathway" id="UPA00545">
    <property type="reaction ID" value="UER00823"/>
</dbReference>
<dbReference type="PRO" id="PR:Q8GX86"/>
<dbReference type="Proteomes" id="UP000006548">
    <property type="component" value="Chromosome 3"/>
</dbReference>
<dbReference type="ExpressionAtlas" id="Q8GX86">
    <property type="expression patterns" value="baseline and differential"/>
</dbReference>
<dbReference type="GO" id="GO:0016020">
    <property type="term" value="C:membrane"/>
    <property type="evidence" value="ECO:0007669"/>
    <property type="project" value="UniProtKB-SubCell"/>
</dbReference>
<dbReference type="GO" id="GO:0004857">
    <property type="term" value="F:enzyme inhibitor activity"/>
    <property type="evidence" value="ECO:0007669"/>
    <property type="project" value="InterPro"/>
</dbReference>
<dbReference type="GO" id="GO:0030599">
    <property type="term" value="F:pectinesterase activity"/>
    <property type="evidence" value="ECO:0007669"/>
    <property type="project" value="UniProtKB-EC"/>
</dbReference>
<dbReference type="GO" id="GO:0042545">
    <property type="term" value="P:cell wall modification"/>
    <property type="evidence" value="ECO:0007669"/>
    <property type="project" value="InterPro"/>
</dbReference>
<dbReference type="GO" id="GO:0045490">
    <property type="term" value="P:pectin catabolic process"/>
    <property type="evidence" value="ECO:0007669"/>
    <property type="project" value="UniProtKB-UniPathway"/>
</dbReference>
<dbReference type="CDD" id="cd15798">
    <property type="entry name" value="PMEI-like_3"/>
    <property type="match status" value="1"/>
</dbReference>
<dbReference type="FunFam" id="1.20.140.40:FF:000001">
    <property type="entry name" value="Pectinesterase"/>
    <property type="match status" value="1"/>
</dbReference>
<dbReference type="FunFam" id="2.160.20.10:FF:000001">
    <property type="entry name" value="Pectinesterase"/>
    <property type="match status" value="1"/>
</dbReference>
<dbReference type="Gene3D" id="1.20.140.40">
    <property type="entry name" value="Invertase/pectin methylesterase inhibitor family protein"/>
    <property type="match status" value="1"/>
</dbReference>
<dbReference type="Gene3D" id="2.160.20.10">
    <property type="entry name" value="Single-stranded right-handed beta-helix, Pectin lyase-like"/>
    <property type="match status" value="1"/>
</dbReference>
<dbReference type="InterPro" id="IPR035513">
    <property type="entry name" value="Invertase/methylesterase_inhib"/>
</dbReference>
<dbReference type="InterPro" id="IPR012334">
    <property type="entry name" value="Pectin_lyas_fold"/>
</dbReference>
<dbReference type="InterPro" id="IPR011050">
    <property type="entry name" value="Pectin_lyase_fold/virulence"/>
</dbReference>
<dbReference type="InterPro" id="IPR000070">
    <property type="entry name" value="Pectinesterase_cat"/>
</dbReference>
<dbReference type="InterPro" id="IPR006501">
    <property type="entry name" value="Pectinesterase_inhib_dom"/>
</dbReference>
<dbReference type="NCBIfam" id="TIGR01614">
    <property type="entry name" value="PME_inhib"/>
    <property type="match status" value="1"/>
</dbReference>
<dbReference type="PANTHER" id="PTHR31707">
    <property type="entry name" value="PECTINESTERASE"/>
    <property type="match status" value="1"/>
</dbReference>
<dbReference type="Pfam" id="PF01095">
    <property type="entry name" value="Pectinesterase"/>
    <property type="match status" value="1"/>
</dbReference>
<dbReference type="Pfam" id="PF04043">
    <property type="entry name" value="PMEI"/>
    <property type="match status" value="1"/>
</dbReference>
<dbReference type="SMART" id="SM00856">
    <property type="entry name" value="PMEI"/>
    <property type="match status" value="1"/>
</dbReference>
<dbReference type="SUPFAM" id="SSF51126">
    <property type="entry name" value="Pectin lyase-like"/>
    <property type="match status" value="1"/>
</dbReference>
<dbReference type="SUPFAM" id="SSF101148">
    <property type="entry name" value="Plant invertase/pectin methylesterase inhibitor"/>
    <property type="match status" value="1"/>
</dbReference>